<proteinExistence type="inferred from homology"/>
<feature type="signal peptide" evidence="2">
    <location>
        <begin position="1"/>
        <end position="17"/>
    </location>
</feature>
<feature type="chain" id="PRO_0000429637" description="Endo-chitosanase B">
    <location>
        <begin position="18"/>
        <end position="240"/>
    </location>
</feature>
<feature type="glycosylation site" description="N-linked (GlcNAc...) asparagine" evidence="2">
    <location>
        <position position="86"/>
    </location>
</feature>
<name>CSNB_ASPOZ</name>
<organism>
    <name type="scientific">Aspergillus oryzae</name>
    <name type="common">Yellow koji mold</name>
    <dbReference type="NCBI Taxonomy" id="5062"/>
    <lineage>
        <taxon>Eukaryota</taxon>
        <taxon>Fungi</taxon>
        <taxon>Dikarya</taxon>
        <taxon>Ascomycota</taxon>
        <taxon>Pezizomycotina</taxon>
        <taxon>Eurotiomycetes</taxon>
        <taxon>Eurotiomycetidae</taxon>
        <taxon>Eurotiales</taxon>
        <taxon>Aspergillaceae</taxon>
        <taxon>Aspergillus</taxon>
        <taxon>Aspergillus subgen. Circumdati</taxon>
    </lineage>
</organism>
<accession>Q8NK76</accession>
<keyword id="KW-0119">Carbohydrate metabolism</keyword>
<keyword id="KW-0325">Glycoprotein</keyword>
<keyword id="KW-0326">Glycosidase</keyword>
<keyword id="KW-0378">Hydrolase</keyword>
<keyword id="KW-0624">Polysaccharide degradation</keyword>
<keyword id="KW-0964">Secreted</keyword>
<keyword id="KW-0732">Signal</keyword>
<gene>
    <name type="primary">csnB</name>
</gene>
<reference key="1">
    <citation type="submission" date="2002-08" db="EMBL/GenBank/DDBJ databases">
        <title>Cloning of a chitosanase (csnB) gene from Aspergillus oryzae strain IAM2660.</title>
        <authorList>
            <person name="Miyazawa T."/>
            <person name="Zhang X."/>
            <person name="Shimosaka M."/>
            <person name="Okazaki M."/>
        </authorList>
    </citation>
    <scope>NUCLEOTIDE SEQUENCE [GENOMIC DNA]</scope>
    <source>
        <strain>IAM2660</strain>
    </source>
</reference>
<protein>
    <recommendedName>
        <fullName>Endo-chitosanase B</fullName>
        <ecNumber>3.2.1.132</ecNumber>
    </recommendedName>
</protein>
<dbReference type="EC" id="3.2.1.132"/>
<dbReference type="EMBL" id="AB090327">
    <property type="protein sequence ID" value="BAC10610.1"/>
    <property type="molecule type" value="Genomic_DNA"/>
</dbReference>
<dbReference type="SMR" id="Q8NK76"/>
<dbReference type="CAZy" id="GH75">
    <property type="family name" value="Glycoside Hydrolase Family 75"/>
</dbReference>
<dbReference type="GlyCosmos" id="Q8NK76">
    <property type="glycosylation" value="1 site, No reported glycans"/>
</dbReference>
<dbReference type="VEuPathDB" id="FungiDB:AO090011000027"/>
<dbReference type="eggNOG" id="ENOG502S39Y">
    <property type="taxonomic scope" value="Eukaryota"/>
</dbReference>
<dbReference type="GO" id="GO:0005576">
    <property type="term" value="C:extracellular region"/>
    <property type="evidence" value="ECO:0007669"/>
    <property type="project" value="UniProtKB-SubCell"/>
</dbReference>
<dbReference type="GO" id="GO:0016977">
    <property type="term" value="F:chitosanase activity"/>
    <property type="evidence" value="ECO:0007669"/>
    <property type="project" value="UniProtKB-EC"/>
</dbReference>
<dbReference type="GO" id="GO:0000272">
    <property type="term" value="P:polysaccharide catabolic process"/>
    <property type="evidence" value="ECO:0007669"/>
    <property type="project" value="UniProtKB-KW"/>
</dbReference>
<dbReference type="InterPro" id="IPR009939">
    <property type="entry name" value="Chitosanase_fungal"/>
</dbReference>
<dbReference type="PANTHER" id="PTHR42061">
    <property type="entry name" value="ENDO-CHITOSANASE"/>
    <property type="match status" value="1"/>
</dbReference>
<dbReference type="PANTHER" id="PTHR42061:SF9">
    <property type="entry name" value="ENDO-CHITOSANASE"/>
    <property type="match status" value="1"/>
</dbReference>
<dbReference type="Pfam" id="PF07335">
    <property type="entry name" value="Glyco_hydro_75"/>
    <property type="match status" value="1"/>
</dbReference>
<evidence type="ECO:0000250" key="1"/>
<evidence type="ECO:0000255" key="2"/>
<evidence type="ECO:0000305" key="3"/>
<sequence>MRLSEILAVALVTGATAYDLPDNLKQIYEKHKGKCSKVYQKGFTNGGHSDGKSFEYCGDIEGAIFMHSSAKGGQYTNMDVDCDGANNSAGKCSNDPSGQGVTAFKDEVKKFGIPDLDANLHPYIVFGNEEHSPQFKPQKYGMEPLSVMAVVCNGKLHYGIWGDTNGGTSTGEASLSMAELCFPEEKPDGDHGHDDNDVLYIGFTGKDAVLERVPLEGKKTEDFEDSIKSIGDKLVAGLKA</sequence>
<comment type="function">
    <text evidence="1">Chitosanase catalyzing the endo-type cleavage of chitosan, the deacylated form of chitin. Chitosanase may be crucial in the degradation of the deacetylated portion of chitin in the fungal cell wall. Chitoolisaccharides produced by the hydrolysis of partially N-acetylated chitosan are known to have many biological activities, including antibacterial activity, immune-enhancing effects, and elicitor activity (By similarity).</text>
</comment>
<comment type="catalytic activity">
    <reaction>
        <text>Endohydrolysis of beta-(1-&gt;4)-linkages between D-glucosamine residues in a partly acetylated chitosan.</text>
        <dbReference type="EC" id="3.2.1.132"/>
    </reaction>
</comment>
<comment type="subcellular location">
    <subcellularLocation>
        <location evidence="1">Secreted</location>
    </subcellularLocation>
</comment>
<comment type="similarity">
    <text evidence="3">Belongs to the glycosyl hydrolase 75 family.</text>
</comment>